<feature type="chain" id="PRO_1000020550" description="Threonine--tRNA ligase">
    <location>
        <begin position="1"/>
        <end position="636"/>
    </location>
</feature>
<feature type="domain" description="TGS" evidence="2">
    <location>
        <begin position="1"/>
        <end position="59"/>
    </location>
</feature>
<feature type="region of interest" description="Catalytic" evidence="1">
    <location>
        <begin position="240"/>
        <end position="531"/>
    </location>
</feature>
<feature type="binding site" evidence="1">
    <location>
        <position position="331"/>
    </location>
    <ligand>
        <name>Zn(2+)</name>
        <dbReference type="ChEBI" id="CHEBI:29105"/>
    </ligand>
</feature>
<feature type="binding site" evidence="1">
    <location>
        <position position="382"/>
    </location>
    <ligand>
        <name>Zn(2+)</name>
        <dbReference type="ChEBI" id="CHEBI:29105"/>
    </ligand>
</feature>
<feature type="binding site" evidence="1">
    <location>
        <position position="508"/>
    </location>
    <ligand>
        <name>Zn(2+)</name>
        <dbReference type="ChEBI" id="CHEBI:29105"/>
    </ligand>
</feature>
<reference key="1">
    <citation type="journal article" date="2007" name="Curr. Biol.">
        <title>Reduced genome of the thioautotrophic intracellular symbiont in a deep-sea clam, Calyptogena okutanii.</title>
        <authorList>
            <person name="Kuwahara H."/>
            <person name="Yoshida T."/>
            <person name="Takaki Y."/>
            <person name="Shimamura S."/>
            <person name="Nishi S."/>
            <person name="Harada M."/>
            <person name="Matsuyama K."/>
            <person name="Takishita K."/>
            <person name="Kawato M."/>
            <person name="Uematsu K."/>
            <person name="Fujiwara Y."/>
            <person name="Sato T."/>
            <person name="Kato C."/>
            <person name="Kitagawa M."/>
            <person name="Kato I."/>
            <person name="Maruyama T."/>
        </authorList>
    </citation>
    <scope>NUCLEOTIDE SEQUENCE [LARGE SCALE GENOMIC DNA]</scope>
    <source>
        <strain>HA</strain>
    </source>
</reference>
<gene>
    <name evidence="1" type="primary">thrS</name>
    <name type="ordered locus">COSY_0595</name>
</gene>
<dbReference type="EC" id="6.1.1.3" evidence="1"/>
<dbReference type="EMBL" id="AP009247">
    <property type="protein sequence ID" value="BAF61710.1"/>
    <property type="molecule type" value="Genomic_DNA"/>
</dbReference>
<dbReference type="RefSeq" id="WP_011929980.1">
    <property type="nucleotide sequence ID" value="NC_009465.1"/>
</dbReference>
<dbReference type="SMR" id="A5CWF9"/>
<dbReference type="STRING" id="412965.COSY_0595"/>
<dbReference type="KEGG" id="vok:COSY_0595"/>
<dbReference type="eggNOG" id="COG0441">
    <property type="taxonomic scope" value="Bacteria"/>
</dbReference>
<dbReference type="HOGENOM" id="CLU_008554_0_1_6"/>
<dbReference type="OrthoDB" id="9802304at2"/>
<dbReference type="Proteomes" id="UP000000247">
    <property type="component" value="Chromosome"/>
</dbReference>
<dbReference type="GO" id="GO:0005737">
    <property type="term" value="C:cytoplasm"/>
    <property type="evidence" value="ECO:0007669"/>
    <property type="project" value="UniProtKB-SubCell"/>
</dbReference>
<dbReference type="GO" id="GO:0005524">
    <property type="term" value="F:ATP binding"/>
    <property type="evidence" value="ECO:0007669"/>
    <property type="project" value="UniProtKB-UniRule"/>
</dbReference>
<dbReference type="GO" id="GO:0046872">
    <property type="term" value="F:metal ion binding"/>
    <property type="evidence" value="ECO:0007669"/>
    <property type="project" value="UniProtKB-KW"/>
</dbReference>
<dbReference type="GO" id="GO:0004829">
    <property type="term" value="F:threonine-tRNA ligase activity"/>
    <property type="evidence" value="ECO:0007669"/>
    <property type="project" value="UniProtKB-UniRule"/>
</dbReference>
<dbReference type="GO" id="GO:0000049">
    <property type="term" value="F:tRNA binding"/>
    <property type="evidence" value="ECO:0007669"/>
    <property type="project" value="UniProtKB-KW"/>
</dbReference>
<dbReference type="GO" id="GO:0006435">
    <property type="term" value="P:threonyl-tRNA aminoacylation"/>
    <property type="evidence" value="ECO:0007669"/>
    <property type="project" value="UniProtKB-UniRule"/>
</dbReference>
<dbReference type="CDD" id="cd01667">
    <property type="entry name" value="TGS_ThrRS"/>
    <property type="match status" value="1"/>
</dbReference>
<dbReference type="CDD" id="cd00860">
    <property type="entry name" value="ThrRS_anticodon"/>
    <property type="match status" value="1"/>
</dbReference>
<dbReference type="CDD" id="cd00771">
    <property type="entry name" value="ThrRS_core"/>
    <property type="match status" value="1"/>
</dbReference>
<dbReference type="FunFam" id="3.30.54.20:FF:000002">
    <property type="entry name" value="Threonine--tRNA ligase"/>
    <property type="match status" value="1"/>
</dbReference>
<dbReference type="FunFam" id="3.30.930.10:FF:000002">
    <property type="entry name" value="Threonine--tRNA ligase"/>
    <property type="match status" value="1"/>
</dbReference>
<dbReference type="FunFam" id="3.40.50.800:FF:000001">
    <property type="entry name" value="Threonine--tRNA ligase"/>
    <property type="match status" value="1"/>
</dbReference>
<dbReference type="FunFam" id="3.30.980.10:FF:000005">
    <property type="entry name" value="Threonyl-tRNA synthetase, mitochondrial"/>
    <property type="match status" value="1"/>
</dbReference>
<dbReference type="Gene3D" id="3.10.20.30">
    <property type="match status" value="1"/>
</dbReference>
<dbReference type="Gene3D" id="3.30.54.20">
    <property type="match status" value="1"/>
</dbReference>
<dbReference type="Gene3D" id="3.40.50.800">
    <property type="entry name" value="Anticodon-binding domain"/>
    <property type="match status" value="1"/>
</dbReference>
<dbReference type="Gene3D" id="3.30.930.10">
    <property type="entry name" value="Bira Bifunctional Protein, Domain 2"/>
    <property type="match status" value="1"/>
</dbReference>
<dbReference type="Gene3D" id="3.30.980.10">
    <property type="entry name" value="Threonyl-trna Synthetase, Chain A, domain 2"/>
    <property type="match status" value="1"/>
</dbReference>
<dbReference type="HAMAP" id="MF_00184">
    <property type="entry name" value="Thr_tRNA_synth"/>
    <property type="match status" value="1"/>
</dbReference>
<dbReference type="InterPro" id="IPR002314">
    <property type="entry name" value="aa-tRNA-synt_IIb"/>
</dbReference>
<dbReference type="InterPro" id="IPR006195">
    <property type="entry name" value="aa-tRNA-synth_II"/>
</dbReference>
<dbReference type="InterPro" id="IPR045864">
    <property type="entry name" value="aa-tRNA-synth_II/BPL/LPL"/>
</dbReference>
<dbReference type="InterPro" id="IPR004154">
    <property type="entry name" value="Anticodon-bd"/>
</dbReference>
<dbReference type="InterPro" id="IPR036621">
    <property type="entry name" value="Anticodon-bd_dom_sf"/>
</dbReference>
<dbReference type="InterPro" id="IPR012675">
    <property type="entry name" value="Beta-grasp_dom_sf"/>
</dbReference>
<dbReference type="InterPro" id="IPR004095">
    <property type="entry name" value="TGS"/>
</dbReference>
<dbReference type="InterPro" id="IPR012676">
    <property type="entry name" value="TGS-like"/>
</dbReference>
<dbReference type="InterPro" id="IPR002320">
    <property type="entry name" value="Thr-tRNA-ligase_IIa"/>
</dbReference>
<dbReference type="InterPro" id="IPR018163">
    <property type="entry name" value="Thr/Ala-tRNA-synth_IIc_edit"/>
</dbReference>
<dbReference type="InterPro" id="IPR047246">
    <property type="entry name" value="ThrRS_anticodon"/>
</dbReference>
<dbReference type="InterPro" id="IPR033728">
    <property type="entry name" value="ThrRS_core"/>
</dbReference>
<dbReference type="InterPro" id="IPR012947">
    <property type="entry name" value="tRNA_SAD"/>
</dbReference>
<dbReference type="NCBIfam" id="TIGR00418">
    <property type="entry name" value="thrS"/>
    <property type="match status" value="1"/>
</dbReference>
<dbReference type="PANTHER" id="PTHR11451:SF44">
    <property type="entry name" value="THREONINE--TRNA LIGASE, CHLOROPLASTIC_MITOCHONDRIAL 2"/>
    <property type="match status" value="1"/>
</dbReference>
<dbReference type="PANTHER" id="PTHR11451">
    <property type="entry name" value="THREONINE-TRNA LIGASE"/>
    <property type="match status" value="1"/>
</dbReference>
<dbReference type="Pfam" id="PF03129">
    <property type="entry name" value="HGTP_anticodon"/>
    <property type="match status" value="1"/>
</dbReference>
<dbReference type="Pfam" id="PF00587">
    <property type="entry name" value="tRNA-synt_2b"/>
    <property type="match status" value="1"/>
</dbReference>
<dbReference type="Pfam" id="PF07973">
    <property type="entry name" value="tRNA_SAD"/>
    <property type="match status" value="1"/>
</dbReference>
<dbReference type="PRINTS" id="PR01047">
    <property type="entry name" value="TRNASYNTHTHR"/>
</dbReference>
<dbReference type="SMART" id="SM00863">
    <property type="entry name" value="tRNA_SAD"/>
    <property type="match status" value="1"/>
</dbReference>
<dbReference type="SUPFAM" id="SSF52954">
    <property type="entry name" value="Class II aaRS ABD-related"/>
    <property type="match status" value="1"/>
</dbReference>
<dbReference type="SUPFAM" id="SSF55681">
    <property type="entry name" value="Class II aaRS and biotin synthetases"/>
    <property type="match status" value="1"/>
</dbReference>
<dbReference type="SUPFAM" id="SSF81271">
    <property type="entry name" value="TGS-like"/>
    <property type="match status" value="1"/>
</dbReference>
<dbReference type="SUPFAM" id="SSF55186">
    <property type="entry name" value="ThrRS/AlaRS common domain"/>
    <property type="match status" value="1"/>
</dbReference>
<dbReference type="PROSITE" id="PS50862">
    <property type="entry name" value="AA_TRNA_LIGASE_II"/>
    <property type="match status" value="1"/>
</dbReference>
<dbReference type="PROSITE" id="PS51880">
    <property type="entry name" value="TGS"/>
    <property type="match status" value="1"/>
</dbReference>
<comment type="function">
    <text evidence="1">Catalyzes the attachment of threonine to tRNA(Thr) in a two-step reaction: L-threonine is first activated by ATP to form Thr-AMP and then transferred to the acceptor end of tRNA(Thr). Also edits incorrectly charged L-seryl-tRNA(Thr).</text>
</comment>
<comment type="catalytic activity">
    <reaction evidence="1">
        <text>tRNA(Thr) + L-threonine + ATP = L-threonyl-tRNA(Thr) + AMP + diphosphate + H(+)</text>
        <dbReference type="Rhea" id="RHEA:24624"/>
        <dbReference type="Rhea" id="RHEA-COMP:9670"/>
        <dbReference type="Rhea" id="RHEA-COMP:9704"/>
        <dbReference type="ChEBI" id="CHEBI:15378"/>
        <dbReference type="ChEBI" id="CHEBI:30616"/>
        <dbReference type="ChEBI" id="CHEBI:33019"/>
        <dbReference type="ChEBI" id="CHEBI:57926"/>
        <dbReference type="ChEBI" id="CHEBI:78442"/>
        <dbReference type="ChEBI" id="CHEBI:78534"/>
        <dbReference type="ChEBI" id="CHEBI:456215"/>
        <dbReference type="EC" id="6.1.1.3"/>
    </reaction>
</comment>
<comment type="cofactor">
    <cofactor evidence="1">
        <name>Zn(2+)</name>
        <dbReference type="ChEBI" id="CHEBI:29105"/>
    </cofactor>
    <text evidence="1">Binds 1 zinc ion per subunit.</text>
</comment>
<comment type="subunit">
    <text evidence="1">Homodimer.</text>
</comment>
<comment type="subcellular location">
    <subcellularLocation>
        <location evidence="1">Cytoplasm</location>
    </subcellularLocation>
</comment>
<comment type="similarity">
    <text evidence="1">Belongs to the class-II aminoacyl-tRNA synthetase family.</text>
</comment>
<name>SYT_VESOH</name>
<organism>
    <name type="scientific">Vesicomyosocius okutanii subsp. Calyptogena okutanii (strain HA)</name>
    <dbReference type="NCBI Taxonomy" id="412965"/>
    <lineage>
        <taxon>Bacteria</taxon>
        <taxon>Pseudomonadati</taxon>
        <taxon>Pseudomonadota</taxon>
        <taxon>Gammaproteobacteria</taxon>
        <taxon>Candidatus Pseudothioglobaceae</taxon>
        <taxon>Candidatus Vesicomyosocius</taxon>
    </lineage>
</organism>
<sequence>MPIITLPDGTKKIFEQVVSVEQVAKSMGLVKAALAGEVDGELVSTSFLIKTDANLTIITANDDQGLEIIRHSTAHLLAQATQMLYPDAQVTIGPVIDNGFYYDFAYKNGFLEGDLIKIEKNMHKLVKQNLKIEKFEMSRDETLQFFKDKGEYYKVKIIESISTDQILSLYKQGDFIDLCRGPHVPSTAKLKNFKLMKLAGAYWRGDSSNEMLQRVYGTAWGNEQDLKVYLHKLEEVARRDHRKIGKTQDLFHIQEETPGMVFWHAKGWILYQLVEQYMRGIFRDNGYQEVHTPQLIDKSLWEKSGHWDKFGDVMFTTTSGDRDYAVKPMNCPAHIQIYNQGLKSYRNLPLRLAEFGSCHRNEPSGTLHGIMRVRNFVQDDGHIFCTPEQIQDEVSTFIDLTFNVYKYFGFEKINIKLSTRPKKRVGSDEVWDKSEIALVEALNAKNIVWELQEGEGAFYGPKIEFILKDCLDRQWQCGTLQVDFSMPKRLGAQFIDENSVKKTPVILHRAIMGSLERFLGILIEHYEGAYPCWLSPIQAVIINISEKHAKFIVDIVKKLKKQGLRVISDLRNEKVSFKIREHSLQRYPYILVVGDREMEKGQVSVRQRGGKDLGAMSVGTFIKKVNQETLLKNQIK</sequence>
<keyword id="KW-0030">Aminoacyl-tRNA synthetase</keyword>
<keyword id="KW-0067">ATP-binding</keyword>
<keyword id="KW-0963">Cytoplasm</keyword>
<keyword id="KW-0436">Ligase</keyword>
<keyword id="KW-0479">Metal-binding</keyword>
<keyword id="KW-0547">Nucleotide-binding</keyword>
<keyword id="KW-0648">Protein biosynthesis</keyword>
<keyword id="KW-1185">Reference proteome</keyword>
<keyword id="KW-0694">RNA-binding</keyword>
<keyword id="KW-0820">tRNA-binding</keyword>
<keyword id="KW-0862">Zinc</keyword>
<evidence type="ECO:0000255" key="1">
    <source>
        <dbReference type="HAMAP-Rule" id="MF_00184"/>
    </source>
</evidence>
<evidence type="ECO:0000255" key="2">
    <source>
        <dbReference type="PROSITE-ProRule" id="PRU01228"/>
    </source>
</evidence>
<protein>
    <recommendedName>
        <fullName evidence="1">Threonine--tRNA ligase</fullName>
        <ecNumber evidence="1">6.1.1.3</ecNumber>
    </recommendedName>
    <alternativeName>
        <fullName evidence="1">Threonyl-tRNA synthetase</fullName>
        <shortName evidence="1">ThrRS</shortName>
    </alternativeName>
</protein>
<proteinExistence type="inferred from homology"/>
<accession>A5CWF9</accession>